<comment type="function">
    <text evidence="1">Exhibits S-adenosyl-L-methionine-dependent methyltransferase activity.</text>
</comment>
<comment type="similarity">
    <text evidence="2">Belongs to the UPF0677 family.</text>
</comment>
<feature type="chain" id="PRO_0000428534" description="Putative S-adenosyl-L-methionine-dependent methyltransferase MT0851">
    <location>
        <begin position="1"/>
        <end position="301"/>
    </location>
</feature>
<feature type="binding site" evidence="1">
    <location>
        <position position="127"/>
    </location>
    <ligand>
        <name>S-adenosyl-L-methionine</name>
        <dbReference type="ChEBI" id="CHEBI:59789"/>
    </ligand>
</feature>
<feature type="binding site" evidence="1">
    <location>
        <begin position="156"/>
        <end position="157"/>
    </location>
    <ligand>
        <name>S-adenosyl-L-methionine</name>
        <dbReference type="ChEBI" id="CHEBI:59789"/>
    </ligand>
</feature>
<evidence type="ECO:0000250" key="1"/>
<evidence type="ECO:0000305" key="2"/>
<dbReference type="EC" id="2.1.1.-"/>
<dbReference type="EMBL" id="AE000516">
    <property type="protein sequence ID" value="AAK45092.1"/>
    <property type="molecule type" value="Genomic_DNA"/>
</dbReference>
<dbReference type="PIR" id="F70811">
    <property type="entry name" value="F70811"/>
</dbReference>
<dbReference type="RefSeq" id="WP_003404349.1">
    <property type="nucleotide sequence ID" value="NZ_KK341227.1"/>
</dbReference>
<dbReference type="SMR" id="P9WFI2"/>
<dbReference type="KEGG" id="mtc:MT0851"/>
<dbReference type="PATRIC" id="fig|83331.31.peg.911"/>
<dbReference type="HOGENOM" id="CLU_056160_2_1_11"/>
<dbReference type="Proteomes" id="UP000001020">
    <property type="component" value="Chromosome"/>
</dbReference>
<dbReference type="GO" id="GO:0008168">
    <property type="term" value="F:methyltransferase activity"/>
    <property type="evidence" value="ECO:0007669"/>
    <property type="project" value="UniProtKB-KW"/>
</dbReference>
<dbReference type="GO" id="GO:0032259">
    <property type="term" value="P:methylation"/>
    <property type="evidence" value="ECO:0007669"/>
    <property type="project" value="UniProtKB-KW"/>
</dbReference>
<dbReference type="FunFam" id="3.40.50.150:FF:000152">
    <property type="entry name" value="S-adenosyl-L-methionine-dependent methyltransferase"/>
    <property type="match status" value="1"/>
</dbReference>
<dbReference type="Gene3D" id="3.40.50.150">
    <property type="entry name" value="Vaccinia Virus protein VP39"/>
    <property type="match status" value="1"/>
</dbReference>
<dbReference type="InterPro" id="IPR007213">
    <property type="entry name" value="Ppm1/Ppm2/Tcmp"/>
</dbReference>
<dbReference type="InterPro" id="IPR029063">
    <property type="entry name" value="SAM-dependent_MTases_sf"/>
</dbReference>
<dbReference type="InterPro" id="IPR011610">
    <property type="entry name" value="SAM_mthyl_Trfase_ML2640-like"/>
</dbReference>
<dbReference type="NCBIfam" id="TIGR00027">
    <property type="entry name" value="mthyl_TIGR00027"/>
    <property type="match status" value="1"/>
</dbReference>
<dbReference type="PANTHER" id="PTHR43619">
    <property type="entry name" value="S-ADENOSYL-L-METHIONINE-DEPENDENT METHYLTRANSFERASE YKTD-RELATED"/>
    <property type="match status" value="1"/>
</dbReference>
<dbReference type="PANTHER" id="PTHR43619:SF2">
    <property type="entry name" value="S-ADENOSYL-L-METHIONINE-DEPENDENT METHYLTRANSFERASES SUPERFAMILY PROTEIN"/>
    <property type="match status" value="1"/>
</dbReference>
<dbReference type="Pfam" id="PF04072">
    <property type="entry name" value="LCM"/>
    <property type="match status" value="1"/>
</dbReference>
<dbReference type="SUPFAM" id="SSF53335">
    <property type="entry name" value="S-adenosyl-L-methionine-dependent methyltransferases"/>
    <property type="match status" value="1"/>
</dbReference>
<organism>
    <name type="scientific">Mycobacterium tuberculosis (strain CDC 1551 / Oshkosh)</name>
    <dbReference type="NCBI Taxonomy" id="83331"/>
    <lineage>
        <taxon>Bacteria</taxon>
        <taxon>Bacillati</taxon>
        <taxon>Actinomycetota</taxon>
        <taxon>Actinomycetes</taxon>
        <taxon>Mycobacteriales</taxon>
        <taxon>Mycobacteriaceae</taxon>
        <taxon>Mycobacterium</taxon>
        <taxon>Mycobacterium tuberculosis complex</taxon>
    </lineage>
</organism>
<sequence length="301" mass="33416">MVRADRDRWDLATSVGATATMVAAQRALAADPRYALIDDPYAAPLVRAVGMDVYTRLVDWQIPVEGDSEFDPQRMATGMACRTRFFDQFFLDATHSGIGQFVILASGLDARAYRLAWPVGSIVYEVDMPEVIEFKTATLSDLGAEPATERRTVAVDLRDDWATALQTAGFDPKVPAAWSAEGLLVYLPVEAQDALFDNITALSAPGSRLAFEFVPDTAIFADERWRNYHNRMSELGFDIDLNELVYHGQRGHVLDYLTRDGWQTSALTVTQLYEANGFAYPDDELATAFADLTYSSATLMR</sequence>
<protein>
    <recommendedName>
        <fullName>Putative S-adenosyl-L-methionine-dependent methyltransferase MT0851</fullName>
        <ecNumber>2.1.1.-</ecNumber>
    </recommendedName>
</protein>
<proteinExistence type="inferred from homology"/>
<keyword id="KW-0489">Methyltransferase</keyword>
<keyword id="KW-1185">Reference proteome</keyword>
<keyword id="KW-0949">S-adenosyl-L-methionine</keyword>
<keyword id="KW-0808">Transferase</keyword>
<gene>
    <name type="ordered locus">MT0851</name>
</gene>
<name>Y851_MYCTO</name>
<accession>P9WFI2</accession>
<accession>L0T7M5</accession>
<accession>O53841</accession>
<accession>Q7D977</accession>
<reference key="1">
    <citation type="journal article" date="2002" name="J. Bacteriol.">
        <title>Whole-genome comparison of Mycobacterium tuberculosis clinical and laboratory strains.</title>
        <authorList>
            <person name="Fleischmann R.D."/>
            <person name="Alland D."/>
            <person name="Eisen J.A."/>
            <person name="Carpenter L."/>
            <person name="White O."/>
            <person name="Peterson J.D."/>
            <person name="DeBoy R.T."/>
            <person name="Dodson R.J."/>
            <person name="Gwinn M.L."/>
            <person name="Haft D.H."/>
            <person name="Hickey E.K."/>
            <person name="Kolonay J.F."/>
            <person name="Nelson W.C."/>
            <person name="Umayam L.A."/>
            <person name="Ermolaeva M.D."/>
            <person name="Salzberg S.L."/>
            <person name="Delcher A."/>
            <person name="Utterback T.R."/>
            <person name="Weidman J.F."/>
            <person name="Khouri H.M."/>
            <person name="Gill J."/>
            <person name="Mikula A."/>
            <person name="Bishai W."/>
            <person name="Jacobs W.R. Jr."/>
            <person name="Venter J.C."/>
            <person name="Fraser C.M."/>
        </authorList>
    </citation>
    <scope>NUCLEOTIDE SEQUENCE [LARGE SCALE GENOMIC DNA]</scope>
    <source>
        <strain>CDC 1551 / Oshkosh</strain>
    </source>
</reference>